<keyword id="KW-0002">3D-structure</keyword>
<keyword id="KW-0025">Alternative splicing</keyword>
<keyword id="KW-0130">Cell adhesion</keyword>
<keyword id="KW-1003">Cell membrane</keyword>
<keyword id="KW-0903">Direct protein sequencing</keyword>
<keyword id="KW-1015">Disulfide bond</keyword>
<keyword id="KW-0325">Glycoprotein</keyword>
<keyword id="KW-0336">GPI-anchor</keyword>
<keyword id="KW-0393">Immunoglobulin domain</keyword>
<keyword id="KW-0449">Lipoprotein</keyword>
<keyword id="KW-0472">Membrane</keyword>
<keyword id="KW-0914">Notch signaling pathway</keyword>
<keyword id="KW-1267">Proteomics identification</keyword>
<keyword id="KW-1185">Reference proteome</keyword>
<keyword id="KW-0677">Repeat</keyword>
<keyword id="KW-0732">Signal</keyword>
<organism>
    <name type="scientific">Homo sapiens</name>
    <name type="common">Human</name>
    <dbReference type="NCBI Taxonomy" id="9606"/>
    <lineage>
        <taxon>Eukaryota</taxon>
        <taxon>Metazoa</taxon>
        <taxon>Chordata</taxon>
        <taxon>Craniata</taxon>
        <taxon>Vertebrata</taxon>
        <taxon>Euteleostomi</taxon>
        <taxon>Mammalia</taxon>
        <taxon>Eutheria</taxon>
        <taxon>Euarchontoglires</taxon>
        <taxon>Primates</taxon>
        <taxon>Haplorrhini</taxon>
        <taxon>Catarrhini</taxon>
        <taxon>Hominidae</taxon>
        <taxon>Homo</taxon>
    </lineage>
</organism>
<gene>
    <name type="primary">CNTN1</name>
</gene>
<name>CNTN1_HUMAN</name>
<proteinExistence type="evidence at protein level"/>
<dbReference type="EMBL" id="Z21488">
    <property type="protein sequence ID" value="CAA79696.1"/>
    <property type="molecule type" value="mRNA"/>
</dbReference>
<dbReference type="EMBL" id="U07819">
    <property type="protein sequence ID" value="AAA67920.1"/>
    <property type="molecule type" value="mRNA"/>
</dbReference>
<dbReference type="EMBL" id="U07820">
    <property type="protein sequence ID" value="AAA67921.1"/>
    <property type="molecule type" value="mRNA"/>
</dbReference>
<dbReference type="EMBL" id="AK289544">
    <property type="protein sequence ID" value="BAF82233.1"/>
    <property type="molecule type" value="mRNA"/>
</dbReference>
<dbReference type="EMBL" id="AK289698">
    <property type="protein sequence ID" value="BAF82387.1"/>
    <property type="molecule type" value="mRNA"/>
</dbReference>
<dbReference type="EMBL" id="BC036569">
    <property type="protein sequence ID" value="AAH36569.1"/>
    <property type="molecule type" value="mRNA"/>
</dbReference>
<dbReference type="CCDS" id="CCDS58225.1">
    <molecule id="Q12860-3"/>
</dbReference>
<dbReference type="CCDS" id="CCDS8737.1">
    <molecule id="Q12860-1"/>
</dbReference>
<dbReference type="CCDS" id="CCDS8738.1">
    <molecule id="Q12860-2"/>
</dbReference>
<dbReference type="PIR" id="A54744">
    <property type="entry name" value="A54744"/>
</dbReference>
<dbReference type="PIR" id="S15394">
    <property type="entry name" value="S15394"/>
</dbReference>
<dbReference type="RefSeq" id="NP_001242992.1">
    <molecule id="Q12860-3"/>
    <property type="nucleotide sequence ID" value="NM_001256063.2"/>
</dbReference>
<dbReference type="RefSeq" id="NP_001242993.1">
    <molecule id="Q12860-3"/>
    <property type="nucleotide sequence ID" value="NM_001256064.2"/>
</dbReference>
<dbReference type="RefSeq" id="NP_001834.2">
    <molecule id="Q12860-1"/>
    <property type="nucleotide sequence ID" value="NM_001843.3"/>
</dbReference>
<dbReference type="RefSeq" id="NP_778203.1">
    <molecule id="Q12860-2"/>
    <property type="nucleotide sequence ID" value="NM_175038.2"/>
</dbReference>
<dbReference type="RefSeq" id="XP_005268708.1">
    <molecule id="Q12860-1"/>
    <property type="nucleotide sequence ID" value="XM_005268651.3"/>
</dbReference>
<dbReference type="RefSeq" id="XP_006719304.1">
    <molecule id="Q12860-1"/>
    <property type="nucleotide sequence ID" value="XM_006719241.3"/>
</dbReference>
<dbReference type="RefSeq" id="XP_011536228.1">
    <molecule id="Q12860-1"/>
    <property type="nucleotide sequence ID" value="XM_011537926.4"/>
</dbReference>
<dbReference type="RefSeq" id="XP_011536229.1">
    <molecule id="Q12860-1"/>
    <property type="nucleotide sequence ID" value="XM_011537927.3"/>
</dbReference>
<dbReference type="RefSeq" id="XP_016874314.1">
    <property type="nucleotide sequence ID" value="XM_017018825.1"/>
</dbReference>
<dbReference type="RefSeq" id="XP_016874315.1">
    <molecule id="Q12860-3"/>
    <property type="nucleotide sequence ID" value="XM_017018826.3"/>
</dbReference>
<dbReference type="RefSeq" id="XP_016874316.1">
    <molecule id="Q12860-3"/>
    <property type="nucleotide sequence ID" value="XM_017018827.3"/>
</dbReference>
<dbReference type="RefSeq" id="XP_024304611.1">
    <molecule id="Q12860-3"/>
    <property type="nucleotide sequence ID" value="XM_024448843.2"/>
</dbReference>
<dbReference type="RefSeq" id="XP_054227104.1">
    <molecule id="Q12860-1"/>
    <property type="nucleotide sequence ID" value="XM_054371129.1"/>
</dbReference>
<dbReference type="RefSeq" id="XP_054227105.1">
    <molecule id="Q12860-1"/>
    <property type="nucleotide sequence ID" value="XM_054371130.1"/>
</dbReference>
<dbReference type="RefSeq" id="XP_054227106.1">
    <molecule id="Q12860-1"/>
    <property type="nucleotide sequence ID" value="XM_054371131.1"/>
</dbReference>
<dbReference type="RefSeq" id="XP_054227107.1">
    <molecule id="Q12860-1"/>
    <property type="nucleotide sequence ID" value="XM_054371132.1"/>
</dbReference>
<dbReference type="RefSeq" id="XP_054227108.1">
    <molecule id="Q12860-3"/>
    <property type="nucleotide sequence ID" value="XM_054371133.1"/>
</dbReference>
<dbReference type="RefSeq" id="XP_054227109.1">
    <molecule id="Q12860-3"/>
    <property type="nucleotide sequence ID" value="XM_054371134.1"/>
</dbReference>
<dbReference type="RefSeq" id="XP_054227110.1">
    <molecule id="Q12860-3"/>
    <property type="nucleotide sequence ID" value="XM_054371135.1"/>
</dbReference>
<dbReference type="PDB" id="2EE2">
    <property type="method" value="NMR"/>
    <property type="chains" value="A=798-903"/>
</dbReference>
<dbReference type="PDB" id="3S97">
    <property type="method" value="X-ray"/>
    <property type="resolution" value="2.30 A"/>
    <property type="chains" value="C/D=133-329"/>
</dbReference>
<dbReference type="PDBsum" id="2EE2"/>
<dbReference type="PDBsum" id="3S97"/>
<dbReference type="SMR" id="Q12860"/>
<dbReference type="BioGRID" id="107672">
    <property type="interactions" value="48"/>
</dbReference>
<dbReference type="DIP" id="DIP-59714N"/>
<dbReference type="FunCoup" id="Q12860">
    <property type="interactions" value="1211"/>
</dbReference>
<dbReference type="IntAct" id="Q12860">
    <property type="interactions" value="43"/>
</dbReference>
<dbReference type="MINT" id="Q12860"/>
<dbReference type="STRING" id="9606.ENSP00000447006"/>
<dbReference type="GlyConnect" id="1930">
    <property type="glycosylation" value="6 N-Linked glycans (6 sites)"/>
</dbReference>
<dbReference type="GlyCosmos" id="Q12860">
    <property type="glycosylation" value="11 sites, 7 glycans"/>
</dbReference>
<dbReference type="GlyGen" id="Q12860">
    <property type="glycosylation" value="11 sites, 20 N-linked glycans (8 sites), 1 O-linked glycan (1 site)"/>
</dbReference>
<dbReference type="iPTMnet" id="Q12860"/>
<dbReference type="PhosphoSitePlus" id="Q12860"/>
<dbReference type="SwissPalm" id="Q12860"/>
<dbReference type="BioMuta" id="CNTN1"/>
<dbReference type="DMDM" id="2497301"/>
<dbReference type="jPOST" id="Q12860"/>
<dbReference type="MassIVE" id="Q12860"/>
<dbReference type="PaxDb" id="9606-ENSP00000447006"/>
<dbReference type="PeptideAtlas" id="Q12860"/>
<dbReference type="ProteomicsDB" id="58988">
    <molecule id="Q12860-1"/>
</dbReference>
<dbReference type="ProteomicsDB" id="58989">
    <molecule id="Q12860-2"/>
</dbReference>
<dbReference type="ProteomicsDB" id="58990">
    <molecule id="Q12860-3"/>
</dbReference>
<dbReference type="Pumba" id="Q12860"/>
<dbReference type="TopDownProteomics" id="Q12860-3">
    <molecule id="Q12860-3"/>
</dbReference>
<dbReference type="ABCD" id="Q12860">
    <property type="antibodies" value="1 sequenced antibody"/>
</dbReference>
<dbReference type="Antibodypedia" id="25021">
    <property type="antibodies" value="337 antibodies from 39 providers"/>
</dbReference>
<dbReference type="DNASU" id="1272"/>
<dbReference type="Ensembl" id="ENST00000347616.5">
    <molecule id="Q12860-1"/>
    <property type="protein sequence ID" value="ENSP00000325660.3"/>
    <property type="gene ID" value="ENSG00000018236.15"/>
</dbReference>
<dbReference type="Ensembl" id="ENST00000348761.2">
    <molecule id="Q12860-2"/>
    <property type="protein sequence ID" value="ENSP00000261160.3"/>
    <property type="gene ID" value="ENSG00000018236.15"/>
</dbReference>
<dbReference type="Ensembl" id="ENST00000547702.5">
    <molecule id="Q12860-3"/>
    <property type="protein sequence ID" value="ENSP00000448004.1"/>
    <property type="gene ID" value="ENSG00000018236.15"/>
</dbReference>
<dbReference type="Ensembl" id="ENST00000547849.6">
    <molecule id="Q12860-3"/>
    <property type="protein sequence ID" value="ENSP00000448653.1"/>
    <property type="gene ID" value="ENSG00000018236.15"/>
</dbReference>
<dbReference type="Ensembl" id="ENST00000551295.7">
    <molecule id="Q12860-1"/>
    <property type="protein sequence ID" value="ENSP00000447006.1"/>
    <property type="gene ID" value="ENSG00000018236.15"/>
</dbReference>
<dbReference type="GeneID" id="1272"/>
<dbReference type="KEGG" id="hsa:1272"/>
<dbReference type="MANE-Select" id="ENST00000551295.7">
    <property type="protein sequence ID" value="ENSP00000447006.1"/>
    <property type="RefSeq nucleotide sequence ID" value="NM_001843.4"/>
    <property type="RefSeq protein sequence ID" value="NP_001834.2"/>
</dbReference>
<dbReference type="UCSC" id="uc001rmm.3">
    <molecule id="Q12860-1"/>
    <property type="organism name" value="human"/>
</dbReference>
<dbReference type="AGR" id="HGNC:2171"/>
<dbReference type="CTD" id="1272"/>
<dbReference type="DisGeNET" id="1272"/>
<dbReference type="GeneCards" id="CNTN1"/>
<dbReference type="HGNC" id="HGNC:2171">
    <property type="gene designation" value="CNTN1"/>
</dbReference>
<dbReference type="HPA" id="ENSG00000018236">
    <property type="expression patterns" value="Tissue enhanced (brain)"/>
</dbReference>
<dbReference type="MalaCards" id="CNTN1"/>
<dbReference type="MIM" id="600016">
    <property type="type" value="gene"/>
</dbReference>
<dbReference type="MIM" id="612540">
    <property type="type" value="phenotype"/>
</dbReference>
<dbReference type="neXtProt" id="NX_Q12860"/>
<dbReference type="OpenTargets" id="ENSG00000018236"/>
<dbReference type="Orphanet" id="210163">
    <property type="disease" value="Congenital lethal myopathy, Compton-North type"/>
</dbReference>
<dbReference type="PharmGKB" id="PA26685"/>
<dbReference type="VEuPathDB" id="HostDB:ENSG00000018236"/>
<dbReference type="eggNOG" id="KOG3513">
    <property type="taxonomic scope" value="Eukaryota"/>
</dbReference>
<dbReference type="GeneTree" id="ENSGT00940000155915"/>
<dbReference type="HOGENOM" id="CLU_005756_0_1_1"/>
<dbReference type="InParanoid" id="Q12860"/>
<dbReference type="OMA" id="XWRMNNG"/>
<dbReference type="OrthoDB" id="6138780at2759"/>
<dbReference type="PAN-GO" id="Q12860">
    <property type="GO annotations" value="6 GO annotations based on evolutionary models"/>
</dbReference>
<dbReference type="PhylomeDB" id="Q12860"/>
<dbReference type="TreeFam" id="TF351103"/>
<dbReference type="PathwayCommons" id="Q12860"/>
<dbReference type="Reactome" id="R-HSA-2122948">
    <property type="pathway name" value="Activated NOTCH1 Transmits Signal to the Nucleus"/>
</dbReference>
<dbReference type="Reactome" id="R-HSA-2979096">
    <property type="pathway name" value="NOTCH2 Activation and Transmission of Signal to the Nucleus"/>
</dbReference>
<dbReference type="Reactome" id="R-HSA-373760">
    <property type="pathway name" value="L1CAM interactions"/>
</dbReference>
<dbReference type="Reactome" id="R-HSA-447043">
    <property type="pathway name" value="Neurofascin interactions"/>
</dbReference>
<dbReference type="SignaLink" id="Q12860"/>
<dbReference type="SIGNOR" id="Q12860"/>
<dbReference type="BioGRID-ORCS" id="1272">
    <property type="hits" value="42 hits in 1152 CRISPR screens"/>
</dbReference>
<dbReference type="CD-CODE" id="FB4E32DD">
    <property type="entry name" value="Presynaptic clusters and postsynaptic densities"/>
</dbReference>
<dbReference type="ChiTaRS" id="CNTN1">
    <property type="organism name" value="human"/>
</dbReference>
<dbReference type="EvolutionaryTrace" id="Q12860"/>
<dbReference type="GeneWiki" id="CNTN1"/>
<dbReference type="GenomeRNAi" id="1272"/>
<dbReference type="Pharos" id="Q12860">
    <property type="development level" value="Tbio"/>
</dbReference>
<dbReference type="PRO" id="PR:Q12860"/>
<dbReference type="Proteomes" id="UP000005640">
    <property type="component" value="Chromosome 12"/>
</dbReference>
<dbReference type="RNAct" id="Q12860">
    <property type="molecule type" value="protein"/>
</dbReference>
<dbReference type="Bgee" id="ENSG00000018236">
    <property type="expression patterns" value="Expressed in cortical plate and 165 other cell types or tissues"/>
</dbReference>
<dbReference type="ExpressionAtlas" id="Q12860">
    <property type="expression patterns" value="baseline and differential"/>
</dbReference>
<dbReference type="GO" id="GO:0030424">
    <property type="term" value="C:axon"/>
    <property type="evidence" value="ECO:0000318"/>
    <property type="project" value="GO_Central"/>
</dbReference>
<dbReference type="GO" id="GO:0070062">
    <property type="term" value="C:extracellular exosome"/>
    <property type="evidence" value="ECO:0007005"/>
    <property type="project" value="UniProtKB"/>
</dbReference>
<dbReference type="GO" id="GO:0098978">
    <property type="term" value="C:glutamatergic synapse"/>
    <property type="evidence" value="ECO:0007669"/>
    <property type="project" value="Ensembl"/>
</dbReference>
<dbReference type="GO" id="GO:0016020">
    <property type="term" value="C:membrane"/>
    <property type="evidence" value="ECO:0000304"/>
    <property type="project" value="ProtInc"/>
</dbReference>
<dbReference type="GO" id="GO:0005886">
    <property type="term" value="C:plasma membrane"/>
    <property type="evidence" value="ECO:0000318"/>
    <property type="project" value="GO_Central"/>
</dbReference>
<dbReference type="GO" id="GO:0045211">
    <property type="term" value="C:postsynaptic membrane"/>
    <property type="evidence" value="ECO:0007669"/>
    <property type="project" value="Ensembl"/>
</dbReference>
<dbReference type="GO" id="GO:0042734">
    <property type="term" value="C:presynaptic membrane"/>
    <property type="evidence" value="ECO:0007669"/>
    <property type="project" value="Ensembl"/>
</dbReference>
<dbReference type="GO" id="GO:0098552">
    <property type="term" value="C:side of membrane"/>
    <property type="evidence" value="ECO:0007669"/>
    <property type="project" value="UniProtKB-KW"/>
</dbReference>
<dbReference type="GO" id="GO:0030246">
    <property type="term" value="F:carbohydrate binding"/>
    <property type="evidence" value="ECO:0007669"/>
    <property type="project" value="Ensembl"/>
</dbReference>
<dbReference type="GO" id="GO:0098632">
    <property type="term" value="F:cell-cell adhesion mediator activity"/>
    <property type="evidence" value="ECO:0000318"/>
    <property type="project" value="GO_Central"/>
</dbReference>
<dbReference type="GO" id="GO:0007411">
    <property type="term" value="P:axon guidance"/>
    <property type="evidence" value="ECO:0000318"/>
    <property type="project" value="GO_Central"/>
</dbReference>
<dbReference type="GO" id="GO:0007155">
    <property type="term" value="P:cell adhesion"/>
    <property type="evidence" value="ECO:0000303"/>
    <property type="project" value="ProtInc"/>
</dbReference>
<dbReference type="GO" id="GO:0098609">
    <property type="term" value="P:cell-cell adhesion"/>
    <property type="evidence" value="ECO:0000318"/>
    <property type="project" value="GO_Central"/>
</dbReference>
<dbReference type="GO" id="GO:0032289">
    <property type="term" value="P:central nervous system myelin formation"/>
    <property type="evidence" value="ECO:0007669"/>
    <property type="project" value="Ensembl"/>
</dbReference>
<dbReference type="GO" id="GO:0021549">
    <property type="term" value="P:cerebellum development"/>
    <property type="evidence" value="ECO:0007669"/>
    <property type="project" value="Ensembl"/>
</dbReference>
<dbReference type="GO" id="GO:0010467">
    <property type="term" value="P:gene expression"/>
    <property type="evidence" value="ECO:0007669"/>
    <property type="project" value="Ensembl"/>
</dbReference>
<dbReference type="GO" id="GO:0007626">
    <property type="term" value="P:locomotory behavior"/>
    <property type="evidence" value="ECO:0007669"/>
    <property type="project" value="Ensembl"/>
</dbReference>
<dbReference type="GO" id="GO:0007219">
    <property type="term" value="P:Notch signaling pathway"/>
    <property type="evidence" value="ECO:0007669"/>
    <property type="project" value="UniProtKB-KW"/>
</dbReference>
<dbReference type="GO" id="GO:0010628">
    <property type="term" value="P:positive regulation of gene expression"/>
    <property type="evidence" value="ECO:0007669"/>
    <property type="project" value="Ensembl"/>
</dbReference>
<dbReference type="GO" id="GO:0010976">
    <property type="term" value="P:positive regulation of neuron projection development"/>
    <property type="evidence" value="ECO:0007669"/>
    <property type="project" value="Ensembl"/>
</dbReference>
<dbReference type="GO" id="GO:0010765">
    <property type="term" value="P:positive regulation of sodium ion transport"/>
    <property type="evidence" value="ECO:0007669"/>
    <property type="project" value="Ensembl"/>
</dbReference>
<dbReference type="CDD" id="cd00063">
    <property type="entry name" value="FN3"/>
    <property type="match status" value="4"/>
</dbReference>
<dbReference type="CDD" id="cd05727">
    <property type="entry name" value="Ig2_Contactin-2-like"/>
    <property type="match status" value="1"/>
</dbReference>
<dbReference type="CDD" id="cd05852">
    <property type="entry name" value="Ig5_Contactin-1"/>
    <property type="match status" value="1"/>
</dbReference>
<dbReference type="CDD" id="cd04970">
    <property type="entry name" value="Ig6_Contactin"/>
    <property type="match status" value="1"/>
</dbReference>
<dbReference type="CDD" id="cd05849">
    <property type="entry name" value="IgI_1_Contactin-1"/>
    <property type="match status" value="1"/>
</dbReference>
<dbReference type="CDD" id="cd05851">
    <property type="entry name" value="IgI_3_Contactin-1"/>
    <property type="match status" value="1"/>
</dbReference>
<dbReference type="FunFam" id="2.60.40.10:FF:000035">
    <property type="entry name" value="Contactin 1"/>
    <property type="match status" value="1"/>
</dbReference>
<dbReference type="FunFam" id="2.60.40.10:FF:000044">
    <property type="entry name" value="Contactin 1"/>
    <property type="match status" value="1"/>
</dbReference>
<dbReference type="FunFam" id="2.60.40.10:FF:000047">
    <property type="entry name" value="Contactin 1"/>
    <property type="match status" value="1"/>
</dbReference>
<dbReference type="FunFam" id="2.60.40.10:FF:000052">
    <property type="entry name" value="Contactin 1"/>
    <property type="match status" value="1"/>
</dbReference>
<dbReference type="FunFam" id="2.60.40.10:FF:000054">
    <property type="entry name" value="Contactin 1"/>
    <property type="match status" value="1"/>
</dbReference>
<dbReference type="FunFam" id="2.60.40.10:FF:000064">
    <property type="entry name" value="Contactin 1"/>
    <property type="match status" value="1"/>
</dbReference>
<dbReference type="FunFam" id="2.60.40.10:FF:000526">
    <property type="entry name" value="Contactin 1"/>
    <property type="match status" value="1"/>
</dbReference>
<dbReference type="FunFam" id="2.60.40.10:FF:000004">
    <property type="entry name" value="DCC isoform 1"/>
    <property type="match status" value="2"/>
</dbReference>
<dbReference type="FunFam" id="2.60.40.10:FF:000005">
    <property type="entry name" value="Neuronal cell adhesion molecule"/>
    <property type="match status" value="1"/>
</dbReference>
<dbReference type="Gene3D" id="2.60.40.10">
    <property type="entry name" value="Immunoglobulins"/>
    <property type="match status" value="10"/>
</dbReference>
<dbReference type="InterPro" id="IPR047102">
    <property type="entry name" value="Contactin-1_2_Ig1"/>
</dbReference>
<dbReference type="InterPro" id="IPR036992">
    <property type="entry name" value="Contactin-1_Ig1"/>
</dbReference>
<dbReference type="InterPro" id="IPR047100">
    <property type="entry name" value="Contactin-1_Ig3"/>
</dbReference>
<dbReference type="InterPro" id="IPR047101">
    <property type="entry name" value="Contactin-1_Ig6"/>
</dbReference>
<dbReference type="InterPro" id="IPR003961">
    <property type="entry name" value="FN3_dom"/>
</dbReference>
<dbReference type="InterPro" id="IPR036116">
    <property type="entry name" value="FN3_sf"/>
</dbReference>
<dbReference type="InterPro" id="IPR007110">
    <property type="entry name" value="Ig-like_dom"/>
</dbReference>
<dbReference type="InterPro" id="IPR036179">
    <property type="entry name" value="Ig-like_dom_sf"/>
</dbReference>
<dbReference type="InterPro" id="IPR013783">
    <property type="entry name" value="Ig-like_fold"/>
</dbReference>
<dbReference type="InterPro" id="IPR013098">
    <property type="entry name" value="Ig_I-set"/>
</dbReference>
<dbReference type="InterPro" id="IPR003599">
    <property type="entry name" value="Ig_sub"/>
</dbReference>
<dbReference type="InterPro" id="IPR003598">
    <property type="entry name" value="Ig_sub2"/>
</dbReference>
<dbReference type="InterPro" id="IPR013151">
    <property type="entry name" value="Immunoglobulin_dom"/>
</dbReference>
<dbReference type="PANTHER" id="PTHR44170:SF10">
    <property type="entry name" value="CONTACTIN-1"/>
    <property type="match status" value="1"/>
</dbReference>
<dbReference type="PANTHER" id="PTHR44170">
    <property type="entry name" value="PROTEIN SIDEKICK"/>
    <property type="match status" value="1"/>
</dbReference>
<dbReference type="Pfam" id="PF00041">
    <property type="entry name" value="fn3"/>
    <property type="match status" value="2"/>
</dbReference>
<dbReference type="Pfam" id="PF07679">
    <property type="entry name" value="I-set"/>
    <property type="match status" value="1"/>
</dbReference>
<dbReference type="Pfam" id="PF00047">
    <property type="entry name" value="ig"/>
    <property type="match status" value="1"/>
</dbReference>
<dbReference type="Pfam" id="PF13927">
    <property type="entry name" value="Ig_3"/>
    <property type="match status" value="3"/>
</dbReference>
<dbReference type="SMART" id="SM00060">
    <property type="entry name" value="FN3"/>
    <property type="match status" value="4"/>
</dbReference>
<dbReference type="SMART" id="SM00409">
    <property type="entry name" value="IG"/>
    <property type="match status" value="6"/>
</dbReference>
<dbReference type="SMART" id="SM00408">
    <property type="entry name" value="IGc2"/>
    <property type="match status" value="5"/>
</dbReference>
<dbReference type="SUPFAM" id="SSF49265">
    <property type="entry name" value="Fibronectin type III"/>
    <property type="match status" value="2"/>
</dbReference>
<dbReference type="SUPFAM" id="SSF48726">
    <property type="entry name" value="Immunoglobulin"/>
    <property type="match status" value="6"/>
</dbReference>
<dbReference type="PROSITE" id="PS50853">
    <property type="entry name" value="FN3"/>
    <property type="match status" value="4"/>
</dbReference>
<dbReference type="PROSITE" id="PS50835">
    <property type="entry name" value="IG_LIKE"/>
    <property type="match status" value="6"/>
</dbReference>
<feature type="signal peptide">
    <location>
        <begin position="1"/>
        <end position="20"/>
    </location>
</feature>
<feature type="chain" id="PRO_0000014685" description="Contactin-1">
    <location>
        <begin position="21"/>
        <end position="993" status="uncertain"/>
    </location>
</feature>
<feature type="propeptide" id="PRO_0000014686" description="Removed in mature form">
    <location>
        <begin position="994" status="uncertain"/>
        <end position="1018"/>
    </location>
</feature>
<feature type="domain" description="Ig-like C2-type 1">
    <location>
        <begin position="41"/>
        <end position="131"/>
    </location>
</feature>
<feature type="domain" description="Ig-like C2-type 2">
    <location>
        <begin position="137"/>
        <end position="223"/>
    </location>
</feature>
<feature type="domain" description="Ig-like C2-type 3">
    <location>
        <begin position="241"/>
        <end position="326"/>
    </location>
</feature>
<feature type="domain" description="Ig-like C2-type 4">
    <location>
        <begin position="331"/>
        <end position="407"/>
    </location>
</feature>
<feature type="domain" description="Ig-like C2-type 5">
    <location>
        <begin position="413"/>
        <end position="500"/>
    </location>
</feature>
<feature type="domain" description="Ig-like C2-type 6">
    <location>
        <begin position="504"/>
        <end position="601"/>
    </location>
</feature>
<feature type="domain" description="Fibronectin type-III 1" evidence="6">
    <location>
        <begin position="606"/>
        <end position="704"/>
    </location>
</feature>
<feature type="domain" description="Fibronectin type-III 2" evidence="6">
    <location>
        <begin position="709"/>
        <end position="806"/>
    </location>
</feature>
<feature type="domain" description="Fibronectin type-III 3" evidence="6">
    <location>
        <begin position="811"/>
        <end position="906"/>
    </location>
</feature>
<feature type="domain" description="Fibronectin type-III 4" evidence="6">
    <location>
        <begin position="907"/>
        <end position="1000"/>
    </location>
</feature>
<feature type="region of interest" description="Disordered" evidence="7">
    <location>
        <begin position="693"/>
        <end position="717"/>
    </location>
</feature>
<feature type="lipid moiety-binding region" description="GPI-anchor amidated serine" evidence="4">
    <location>
        <position position="993"/>
    </location>
</feature>
<feature type="glycosylation site" description="N-linked (GlcNAc...) asparagine" evidence="4">
    <location>
        <position position="208"/>
    </location>
</feature>
<feature type="glycosylation site" description="N-linked (GlcNAc...) asparagine" evidence="4">
    <location>
        <position position="258"/>
    </location>
</feature>
<feature type="glycosylation site" description="N-linked (GlcNAc...) asparagine" evidence="4">
    <location>
        <position position="338"/>
    </location>
</feature>
<feature type="glycosylation site" description="N-linked (GlcNAc...) asparagine" evidence="4">
    <location>
        <position position="457"/>
    </location>
</feature>
<feature type="glycosylation site" description="N-linked (GlcNAc...) asparagine" evidence="4">
    <location>
        <position position="473"/>
    </location>
</feature>
<feature type="glycosylation site" description="N-linked (GlcNAc...) (complex) asparagine" evidence="8 11">
    <location>
        <position position="494"/>
    </location>
</feature>
<feature type="glycosylation site" description="N-linked (GlcNAc...) asparagine" evidence="4">
    <location>
        <position position="521"/>
    </location>
</feature>
<feature type="glycosylation site" description="N-linked (GlcNAc...) asparagine" evidence="4">
    <location>
        <position position="591"/>
    </location>
</feature>
<feature type="glycosylation site" description="N-linked (GlcNAc...) asparagine" evidence="4">
    <location>
        <position position="933"/>
    </location>
</feature>
<feature type="disulfide bond" evidence="5">
    <location>
        <begin position="65"/>
        <end position="114"/>
    </location>
</feature>
<feature type="disulfide bond" evidence="5">
    <location>
        <begin position="158"/>
        <end position="211"/>
    </location>
</feature>
<feature type="disulfide bond" evidence="5">
    <location>
        <begin position="263"/>
        <end position="310"/>
    </location>
</feature>
<feature type="disulfide bond" evidence="5">
    <location>
        <begin position="352"/>
        <end position="391"/>
    </location>
</feature>
<feature type="disulfide bond" evidence="5">
    <location>
        <begin position="436"/>
        <end position="484"/>
    </location>
</feature>
<feature type="disulfide bond" evidence="5">
    <location>
        <begin position="526"/>
        <end position="583"/>
    </location>
</feature>
<feature type="splice variant" id="VSP_002500" description="In isoform 2." evidence="17">
    <location>
        <begin position="21"/>
        <end position="31"/>
    </location>
</feature>
<feature type="splice variant" id="VSP_011959" description="In isoform 3." evidence="15 16">
    <original>PPGPPGGLRIEDIRATSVALTWSRG</original>
    <variation>KNRKGGEKNMVDSFLPVCASLPPTW</variation>
    <location>
        <begin position="603"/>
        <end position="627"/>
    </location>
</feature>
<feature type="splice variant" id="VSP_011960" description="In isoform 3." evidence="15 16">
    <location>
        <begin position="628"/>
        <end position="1018"/>
    </location>
</feature>
<feature type="sequence variant" id="VAR_035506" description="In a colorectal cancer sample; somatic mutation." evidence="9">
    <original>P</original>
    <variation>H</variation>
    <location>
        <position position="794"/>
    </location>
</feature>
<feature type="sequence variant" id="VAR_011722" description="In dbSNP:rs1056020.">
    <original>V</original>
    <variation>L</variation>
    <location>
        <position position="798"/>
    </location>
</feature>
<feature type="sequence variant" id="VAR_049866" description="In dbSNP:rs11553341.">
    <original>E</original>
    <variation>G</variation>
    <location>
        <position position="824"/>
    </location>
</feature>
<feature type="sequence conflict" description="In Ref. 5; AA sequence." evidence="18" ref="5">
    <original>V</original>
    <variation>I</variation>
    <location>
        <position position="682"/>
    </location>
</feature>
<feature type="sequence conflict" description="In Ref. 5; AA sequence." evidence="18" ref="5">
    <original>L</original>
    <variation>P</variation>
    <location>
        <position position="687"/>
    </location>
</feature>
<feature type="sequence conflict" description="In Ref. 5; AA sequence." evidence="18" ref="5">
    <original>R</original>
    <variation>I</variation>
    <location>
        <position position="689"/>
    </location>
</feature>
<feature type="sequence conflict" description="In Ref. 5; AA sequence." evidence="18" ref="5">
    <original>P</original>
    <variation>F</variation>
    <location>
        <position position="692"/>
    </location>
</feature>
<feature type="strand" evidence="20">
    <location>
        <begin position="146"/>
        <end position="149"/>
    </location>
</feature>
<feature type="strand" evidence="20">
    <location>
        <begin position="154"/>
        <end position="156"/>
    </location>
</feature>
<feature type="strand" evidence="20">
    <location>
        <begin position="162"/>
        <end position="166"/>
    </location>
</feature>
<feature type="strand" evidence="20">
    <location>
        <begin position="169"/>
        <end position="176"/>
    </location>
</feature>
<feature type="strand" evidence="20">
    <location>
        <begin position="184"/>
        <end position="189"/>
    </location>
</feature>
<feature type="turn" evidence="20">
    <location>
        <begin position="191"/>
        <end position="193"/>
    </location>
</feature>
<feature type="strand" evidence="20">
    <location>
        <begin position="196"/>
        <end position="200"/>
    </location>
</feature>
<feature type="helix" evidence="20">
    <location>
        <begin position="203"/>
        <end position="205"/>
    </location>
</feature>
<feature type="strand" evidence="20">
    <location>
        <begin position="207"/>
        <end position="215"/>
    </location>
</feature>
<feature type="helix" evidence="20">
    <location>
        <begin position="216"/>
        <end position="218"/>
    </location>
</feature>
<feature type="strand" evidence="20">
    <location>
        <begin position="220"/>
        <end position="223"/>
    </location>
</feature>
<feature type="strand" evidence="20">
    <location>
        <begin position="227"/>
        <end position="232"/>
    </location>
</feature>
<feature type="strand" evidence="20">
    <location>
        <begin position="240"/>
        <end position="247"/>
    </location>
</feature>
<feature type="strand" evidence="20">
    <location>
        <begin position="251"/>
        <end position="254"/>
    </location>
</feature>
<feature type="strand" evidence="20">
    <location>
        <begin position="259"/>
        <end position="269"/>
    </location>
</feature>
<feature type="strand" evidence="20">
    <location>
        <begin position="272"/>
        <end position="277"/>
    </location>
</feature>
<feature type="strand" evidence="20">
    <location>
        <begin position="287"/>
        <end position="289"/>
    </location>
</feature>
<feature type="turn" evidence="20">
    <location>
        <begin position="290"/>
        <end position="293"/>
    </location>
</feature>
<feature type="strand" evidence="20">
    <location>
        <begin position="294"/>
        <end position="297"/>
    </location>
</feature>
<feature type="helix" evidence="20">
    <location>
        <begin position="302"/>
        <end position="304"/>
    </location>
</feature>
<feature type="strand" evidence="20">
    <location>
        <begin position="306"/>
        <end position="314"/>
    </location>
</feature>
<feature type="strand" evidence="20">
    <location>
        <begin position="317"/>
        <end position="328"/>
    </location>
</feature>
<feature type="strand" evidence="19">
    <location>
        <begin position="816"/>
        <end position="821"/>
    </location>
</feature>
<feature type="strand" evidence="19">
    <location>
        <begin position="824"/>
        <end position="828"/>
    </location>
</feature>
<feature type="strand" evidence="19">
    <location>
        <begin position="839"/>
        <end position="849"/>
    </location>
</feature>
<feature type="helix" evidence="19">
    <location>
        <begin position="851"/>
        <end position="853"/>
    </location>
</feature>
<feature type="strand" evidence="19">
    <location>
        <begin position="855"/>
        <end position="860"/>
    </location>
</feature>
<feature type="strand" evidence="19">
    <location>
        <begin position="864"/>
        <end position="868"/>
    </location>
</feature>
<feature type="strand" evidence="19">
    <location>
        <begin position="876"/>
        <end position="884"/>
    </location>
</feature>
<feature type="strand" evidence="19">
    <location>
        <begin position="886"/>
        <end position="888"/>
    </location>
</feature>
<feature type="strand" evidence="19">
    <location>
        <begin position="896"/>
        <end position="899"/>
    </location>
</feature>
<feature type="sequence conflict" description="In Ref. 3; BAF82233." evidence="18" ref="3">
    <original>K</original>
    <variation>I</variation>
    <location sequence="Q12860-3">
        <position position="610"/>
    </location>
</feature>
<accession>Q12860</accession>
<accession>A8K0H9</accession>
<accession>A8K0Y3</accession>
<accession>Q12861</accession>
<accession>Q14030</accession>
<accession>Q7M4P0</accession>
<accession>Q8N466</accession>
<sequence length="1018" mass="113320">MKMWLLVSHLVIISITTCLAEFTWYRRYGHGVSEEDKGFGPIFEEQPINTIYPEESLEGKVSLNCRARASPFPVYKWRMNNGDVDLTSDRYSMVGGNLVINNPDKQKDAGIYYCLASNNYGMVRSTEATLSFGYLDPFPPEERPEVRVKEGKGMVLLCDPPYHFPDDLSYRWLLNEFPVFITMDKRRFVSQTNGNLYIANVEASDKGNYSCFVSSPSITKSVFSKFIPLIPIPERTTKPYPADIVVQFKDVYALMGQNVTLECFALGNPVPDIRWRKVLEPMPSTAEISTSGAVLKIFNIQLEDEGIYECEAENIRGKDKHQARIYVQAFPEWVEHINDTEVDIGSDLYWPCVATGKPIPTIRWLKNGYAYHKGELRLYDVTFENAGMYQCIAENTYGAIYANAELKILALAPTFEMNPMKKKILAAKGGRVIIECKPKAAPKPKFSWSKGTEWLVNSSRILIWEDGSLEINNITRNDGGIYTCFAENNRGKANSTGTLVITDPTRIILAPINADITVGENATMQCAASFDPALDLTFVWSFNGYVIDFNKENIHYQRNFMLDSNGELLIRNAQLKHAGRYTCTAQTIVDNSSASADLVVRGPPGPPGGLRIEDIRATSVALTWSRGSDNHSPISKYTIQTKTILSDDWKDAKTDPPIIEGNMEAARAVDLIPWMEYEFRVVATNTLGRGEPSIPSNRIKTDGAAPNVAPSDVGGGGGRNRELTITWAPLSREYHYGNNFGYIVAFKPFDGEEWKKVTVTNPDTGRYVHKDETMSPSTAFQVKVKAFNNKGDGPYSLVAVINSAQDAPSEAPTEVGVKVLSSSEISVHWEHVLEKIVESYQIRYWAAHDKEEAANRVQVTSQEYSARLENLLPDTQYFIEVGACNSAGCGPPSDMIEAFTKKAPPSQPPRIISSVRSGSRYIITWDHVVALSNESTVTGYKVLYRPDGQHDGKLYSTHKHSIEVPIPRDGEYVVEVRAHSDGGDGVVSQVKISGAPTLSPSLLGLLLPAFGILVYLEF</sequence>
<evidence type="ECO:0000250" key="1"/>
<evidence type="ECO:0000250" key="2">
    <source>
        <dbReference type="UniProtKB" id="P12960"/>
    </source>
</evidence>
<evidence type="ECO:0000250" key="3">
    <source>
        <dbReference type="UniProtKB" id="Q63198"/>
    </source>
</evidence>
<evidence type="ECO:0000255" key="4"/>
<evidence type="ECO:0000255" key="5">
    <source>
        <dbReference type="PROSITE-ProRule" id="PRU00114"/>
    </source>
</evidence>
<evidence type="ECO:0000255" key="6">
    <source>
        <dbReference type="PROSITE-ProRule" id="PRU00316"/>
    </source>
</evidence>
<evidence type="ECO:0000256" key="7">
    <source>
        <dbReference type="SAM" id="MobiDB-lite"/>
    </source>
</evidence>
<evidence type="ECO:0000269" key="8">
    <source>
    </source>
</evidence>
<evidence type="ECO:0000269" key="9">
    <source>
    </source>
</evidence>
<evidence type="ECO:0000269" key="10">
    <source>
    </source>
</evidence>
<evidence type="ECO:0000269" key="11">
    <source>
    </source>
</evidence>
<evidence type="ECO:0000269" key="12">
    <source>
    </source>
</evidence>
<evidence type="ECO:0000269" key="13">
    <source>
    </source>
</evidence>
<evidence type="ECO:0000269" key="14">
    <source>
    </source>
</evidence>
<evidence type="ECO:0000303" key="15">
    <source>
    </source>
</evidence>
<evidence type="ECO:0000303" key="16">
    <source>
    </source>
</evidence>
<evidence type="ECO:0000303" key="17">
    <source>
    </source>
</evidence>
<evidence type="ECO:0000305" key="18"/>
<evidence type="ECO:0007829" key="19">
    <source>
        <dbReference type="PDB" id="2EE2"/>
    </source>
</evidence>
<evidence type="ECO:0007829" key="20">
    <source>
        <dbReference type="PDB" id="3S97"/>
    </source>
</evidence>
<comment type="function">
    <text evidence="1">Contactins mediate cell surface interactions during nervous system development. Involved in the formation of paranodal axo-glial junctions in myelinated peripheral nerves and in the signaling between axons and myelinating glial cells via its association with CNTNAP1. Participates in oligodendrocytes generation by acting as a ligand of NOTCH1. Its association with NOTCH1 promotes NOTCH1 activation through the released notch intracellular domain (NICD) and subsequent translocation to the nucleus. Interaction with TNR induces a repulsion of neurons and an inhibition of neurite outgrowth (By similarity).</text>
</comment>
<comment type="subunit">
    <text evidence="2 3 12 13">Monomer (PubMed:2026173). Interacts with CNTNAP1 in cis form (By similarity). Binds to the carbonic-anhydrase like domain of PTPRZ1 (PubMed:20133774). Interacts with NOTCH1 and TNR. Detected in a complex with NRCAM and PTPRB (By similarity). Interacts with TASOR (By similarity).</text>
</comment>
<comment type="interaction">
    <interactant intactId="EBI-5564336">
        <id>Q12860</id>
    </interactant>
    <interactant intactId="EBI-310892">
        <id>Q9UHC6</id>
        <label>CNTNAP2</label>
    </interactant>
    <organismsDiffer>false</organismsDiffer>
    <experiments>5</experiments>
</comment>
<comment type="interaction">
    <interactant intactId="EBI-5564336">
        <id>Q12860</id>
    </interactant>
    <interactant intactId="EBI-2263175">
        <id>P23471</id>
        <label>PTPRZ1</label>
    </interactant>
    <organismsDiffer>false</organismsDiffer>
    <experiments>3</experiments>
</comment>
<comment type="subcellular location">
    <molecule>Isoform 1</molecule>
    <subcellularLocation>
        <location>Cell membrane</location>
        <topology>Lipid-anchor</topology>
        <topology>GPI-anchor</topology>
        <orientation>Extracellular side</orientation>
    </subcellularLocation>
</comment>
<comment type="subcellular location">
    <molecule>Isoform 2</molecule>
    <subcellularLocation>
        <location>Cell membrane</location>
        <topology>Lipid-anchor</topology>
        <topology>GPI-anchor</topology>
        <orientation>Extracellular side</orientation>
    </subcellularLocation>
</comment>
<comment type="alternative products">
    <event type="alternative splicing"/>
    <isoform>
        <id>Q12860-1</id>
        <name>1</name>
        <sequence type="displayed"/>
    </isoform>
    <isoform>
        <id>Q12860-2</id>
        <name>2</name>
        <sequence type="described" ref="VSP_002500"/>
    </isoform>
    <isoform>
        <id>Q12860-3</id>
        <name>3</name>
        <sequence type="described" ref="VSP_011959 VSP_011960"/>
    </isoform>
</comment>
<comment type="tissue specificity">
    <text evidence="13 14">Strongly expressed in brain and in neuroblastoma and retinoblastoma cell lines. Lower levels of expression in lung, pancreas, kidney and skeletal muscle.</text>
</comment>
<comment type="disease" evidence="10">
    <disease id="DI-01385">
        <name>Congenital myopathy 12</name>
        <acronym>CMYO12</acronym>
        <description>A lethal, autosomal recessive, congenital myopathy characterized by fetal akinesia, neonatal hypotonia, severe muscle weakness, loss of beta2-syntrophin and alpha-dystrobrevin from the muscle sarcolemma and disruption of sarcomeres with disorganization of the Z band.</description>
        <dbReference type="MIM" id="612540"/>
    </disease>
    <text>The disease is caused by variants affecting the gene represented in this entry.</text>
</comment>
<comment type="similarity">
    <text evidence="18">Belongs to the immunoglobulin superfamily. Contactin family.</text>
</comment>
<protein>
    <recommendedName>
        <fullName>Contactin-1</fullName>
    </recommendedName>
    <alternativeName>
        <fullName>Glycoprotein gp135</fullName>
    </alternativeName>
    <alternativeName>
        <fullName>Neural cell surface protein F3</fullName>
    </alternativeName>
</protein>
<reference key="1">
    <citation type="journal article" date="1994" name="Brain Res. Mol. Brain Res.">
        <title>Identification and characterization of the human cell adhesion molecule contactin.</title>
        <authorList>
            <person name="Reid R.A."/>
            <person name="Bronson D.D."/>
            <person name="Young K.M."/>
            <person name="Hemperly J.J."/>
        </authorList>
    </citation>
    <scope>NUCLEOTIDE SEQUENCE [MRNA] (ISOFORM 1)</scope>
    <scope>TISSUE SPECIFICITY</scope>
    <source>
        <tissue>Neuroblastoma</tissue>
    </source>
</reference>
<reference key="2">
    <citation type="journal article" date="1994" name="Genomics">
        <title>Molecular cloning and in situ localization of the human contactin gene (CNTN1) on chromosome 12q11-q12.</title>
        <authorList>
            <person name="Berglund E.O."/>
            <person name="Ranscht B."/>
        </authorList>
    </citation>
    <scope>NUCLEOTIDE SEQUENCE [MRNA] (ISOFORMS 1 AND 2)</scope>
    <source>
        <tissue>Brain</tissue>
    </source>
</reference>
<reference key="3">
    <citation type="journal article" date="2004" name="Nat. Genet.">
        <title>Complete sequencing and characterization of 21,243 full-length human cDNAs.</title>
        <authorList>
            <person name="Ota T."/>
            <person name="Suzuki Y."/>
            <person name="Nishikawa T."/>
            <person name="Otsuki T."/>
            <person name="Sugiyama T."/>
            <person name="Irie R."/>
            <person name="Wakamatsu A."/>
            <person name="Hayashi K."/>
            <person name="Sato H."/>
            <person name="Nagai K."/>
            <person name="Kimura K."/>
            <person name="Makita H."/>
            <person name="Sekine M."/>
            <person name="Obayashi M."/>
            <person name="Nishi T."/>
            <person name="Shibahara T."/>
            <person name="Tanaka T."/>
            <person name="Ishii S."/>
            <person name="Yamamoto J."/>
            <person name="Saito K."/>
            <person name="Kawai Y."/>
            <person name="Isono Y."/>
            <person name="Nakamura Y."/>
            <person name="Nagahari K."/>
            <person name="Murakami K."/>
            <person name="Yasuda T."/>
            <person name="Iwayanagi T."/>
            <person name="Wagatsuma M."/>
            <person name="Shiratori A."/>
            <person name="Sudo H."/>
            <person name="Hosoiri T."/>
            <person name="Kaku Y."/>
            <person name="Kodaira H."/>
            <person name="Kondo H."/>
            <person name="Sugawara M."/>
            <person name="Takahashi M."/>
            <person name="Kanda K."/>
            <person name="Yokoi T."/>
            <person name="Furuya T."/>
            <person name="Kikkawa E."/>
            <person name="Omura Y."/>
            <person name="Abe K."/>
            <person name="Kamihara K."/>
            <person name="Katsuta N."/>
            <person name="Sato K."/>
            <person name="Tanikawa M."/>
            <person name="Yamazaki M."/>
            <person name="Ninomiya K."/>
            <person name="Ishibashi T."/>
            <person name="Yamashita H."/>
            <person name="Murakawa K."/>
            <person name="Fujimori K."/>
            <person name="Tanai H."/>
            <person name="Kimata M."/>
            <person name="Watanabe M."/>
            <person name="Hiraoka S."/>
            <person name="Chiba Y."/>
            <person name="Ishida S."/>
            <person name="Ono Y."/>
            <person name="Takiguchi S."/>
            <person name="Watanabe S."/>
            <person name="Yosida M."/>
            <person name="Hotuta T."/>
            <person name="Kusano J."/>
            <person name="Kanehori K."/>
            <person name="Takahashi-Fujii A."/>
            <person name="Hara H."/>
            <person name="Tanase T.-O."/>
            <person name="Nomura Y."/>
            <person name="Togiya S."/>
            <person name="Komai F."/>
            <person name="Hara R."/>
            <person name="Takeuchi K."/>
            <person name="Arita M."/>
            <person name="Imose N."/>
            <person name="Musashino K."/>
            <person name="Yuuki H."/>
            <person name="Oshima A."/>
            <person name="Sasaki N."/>
            <person name="Aotsuka S."/>
            <person name="Yoshikawa Y."/>
            <person name="Matsunawa H."/>
            <person name="Ichihara T."/>
            <person name="Shiohata N."/>
            <person name="Sano S."/>
            <person name="Moriya S."/>
            <person name="Momiyama H."/>
            <person name="Satoh N."/>
            <person name="Takami S."/>
            <person name="Terashima Y."/>
            <person name="Suzuki O."/>
            <person name="Nakagawa S."/>
            <person name="Senoh A."/>
            <person name="Mizoguchi H."/>
            <person name="Goto Y."/>
            <person name="Shimizu F."/>
            <person name="Wakebe H."/>
            <person name="Hishigaki H."/>
            <person name="Watanabe T."/>
            <person name="Sugiyama A."/>
            <person name="Takemoto M."/>
            <person name="Kawakami B."/>
            <person name="Yamazaki M."/>
            <person name="Watanabe K."/>
            <person name="Kumagai A."/>
            <person name="Itakura S."/>
            <person name="Fukuzumi Y."/>
            <person name="Fujimori Y."/>
            <person name="Komiyama M."/>
            <person name="Tashiro H."/>
            <person name="Tanigami A."/>
            <person name="Fujiwara T."/>
            <person name="Ono T."/>
            <person name="Yamada K."/>
            <person name="Fujii Y."/>
            <person name="Ozaki K."/>
            <person name="Hirao M."/>
            <person name="Ohmori Y."/>
            <person name="Kawabata A."/>
            <person name="Hikiji T."/>
            <person name="Kobatake N."/>
            <person name="Inagaki H."/>
            <person name="Ikema Y."/>
            <person name="Okamoto S."/>
            <person name="Okitani R."/>
            <person name="Kawakami T."/>
            <person name="Noguchi S."/>
            <person name="Itoh T."/>
            <person name="Shigeta K."/>
            <person name="Senba T."/>
            <person name="Matsumura K."/>
            <person name="Nakajima Y."/>
            <person name="Mizuno T."/>
            <person name="Morinaga M."/>
            <person name="Sasaki M."/>
            <person name="Togashi T."/>
            <person name="Oyama M."/>
            <person name="Hata H."/>
            <person name="Watanabe M."/>
            <person name="Komatsu T."/>
            <person name="Mizushima-Sugano J."/>
            <person name="Satoh T."/>
            <person name="Shirai Y."/>
            <person name="Takahashi Y."/>
            <person name="Nakagawa K."/>
            <person name="Okumura K."/>
            <person name="Nagase T."/>
            <person name="Nomura N."/>
            <person name="Kikuchi H."/>
            <person name="Masuho Y."/>
            <person name="Yamashita R."/>
            <person name="Nakai K."/>
            <person name="Yada T."/>
            <person name="Nakamura Y."/>
            <person name="Ohara O."/>
            <person name="Isogai T."/>
            <person name="Sugano S."/>
        </authorList>
    </citation>
    <scope>NUCLEOTIDE SEQUENCE [LARGE SCALE MRNA] (ISOFORM 3)</scope>
    <source>
        <tissue>Amygdala</tissue>
        <tissue>Cerebellum</tissue>
    </source>
</reference>
<reference key="4">
    <citation type="journal article" date="2004" name="Genome Res.">
        <title>The status, quality, and expansion of the NIH full-length cDNA project: the Mammalian Gene Collection (MGC).</title>
        <authorList>
            <consortium name="The MGC Project Team"/>
        </authorList>
    </citation>
    <scope>NUCLEOTIDE SEQUENCE [LARGE SCALE MRNA] (ISOFORM 3)</scope>
    <source>
        <tissue>Brain</tissue>
    </source>
</reference>
<reference key="5">
    <citation type="journal article" date="1991" name="Eur. J. Biochem.">
        <title>Isolation and characterization of a membrane glycoprotein from human brain with sequence similarities to cell adhesion proteins from chicken and mouse.</title>
        <authorList>
            <person name="Berglund E."/>
            <person name="Stigbrand T."/>
            <person name="Carlsson S.R."/>
        </authorList>
    </citation>
    <scope>PROTEIN SEQUENCE OF 21-40 AND 679-693 (ISOFORM 1)</scope>
    <scope>SUBUNIT</scope>
    <scope>TISSUE SPECIFICITY</scope>
    <source>
        <tissue>Brain cortex</tissue>
    </source>
</reference>
<reference key="6">
    <citation type="journal article" date="2005" name="J. Proteome Res.">
        <title>Human plasma N-glycoproteome analysis by immunoaffinity subtraction, hydrazide chemistry, and mass spectrometry.</title>
        <authorList>
            <person name="Liu T."/>
            <person name="Qian W.-J."/>
            <person name="Gritsenko M.A."/>
            <person name="Camp D.G. II"/>
            <person name="Monroe M.E."/>
            <person name="Moore R.J."/>
            <person name="Smith R.D."/>
        </authorList>
    </citation>
    <scope>GLYCOSYLATION [LARGE SCALE ANALYSIS] AT ASN-494</scope>
    <source>
        <tissue>Plasma</tissue>
    </source>
</reference>
<reference key="7">
    <citation type="journal article" date="2009" name="Mol. Cell. Proteomics">
        <title>A strategy for precise and large scale identification of core fucosylated glycoproteins.</title>
        <authorList>
            <person name="Jia W."/>
            <person name="Lu Z."/>
            <person name="Fu Y."/>
            <person name="Wang H.P."/>
            <person name="Wang L.H."/>
            <person name="Chi H."/>
            <person name="Yuan Z.F."/>
            <person name="Zheng Z.B."/>
            <person name="Song L.N."/>
            <person name="Han H.H."/>
            <person name="Liang Y.M."/>
            <person name="Wang J.L."/>
            <person name="Cai Y."/>
            <person name="Zhang Y.K."/>
            <person name="Deng Y.L."/>
            <person name="Ying W.T."/>
            <person name="He S.M."/>
            <person name="Qian X.H."/>
        </authorList>
    </citation>
    <scope>GLYCOSYLATION AT ASN-494</scope>
</reference>
<reference key="8">
    <citation type="journal article" date="2010" name="Proc. Natl. Acad. Sci. U.S.A.">
        <title>The protein tyrosine phosphatases PTPRZ and PTPRG bind to distinct members of the contactin family of neural recognition molecules.</title>
        <authorList>
            <person name="Bouyain S."/>
            <person name="Watkins D.J."/>
        </authorList>
    </citation>
    <scope>INTERACTION WITH PTPRZ1</scope>
</reference>
<reference key="9">
    <citation type="submission" date="2007-08" db="PDB data bank">
        <title>Solution structures of the FN3 domain of human contactin 1.</title>
        <authorList>
            <consortium name="RIKEN structural genomics initiative (RSGI)"/>
        </authorList>
    </citation>
    <scope>STRUCTURE BY NMR OF 791-903</scope>
</reference>
<reference key="10">
    <citation type="journal article" date="2006" name="Science">
        <title>The consensus coding sequences of human breast and colorectal cancers.</title>
        <authorList>
            <person name="Sjoeblom T."/>
            <person name="Jones S."/>
            <person name="Wood L.D."/>
            <person name="Parsons D.W."/>
            <person name="Lin J."/>
            <person name="Barber T.D."/>
            <person name="Mandelker D."/>
            <person name="Leary R.J."/>
            <person name="Ptak J."/>
            <person name="Silliman N."/>
            <person name="Szabo S."/>
            <person name="Buckhaults P."/>
            <person name="Farrell C."/>
            <person name="Meeh P."/>
            <person name="Markowitz S.D."/>
            <person name="Willis J."/>
            <person name="Dawson D."/>
            <person name="Willson J.K.V."/>
            <person name="Gazdar A.F."/>
            <person name="Hartigan J."/>
            <person name="Wu L."/>
            <person name="Liu C."/>
            <person name="Parmigiani G."/>
            <person name="Park B.H."/>
            <person name="Bachman K.E."/>
            <person name="Papadopoulos N."/>
            <person name="Vogelstein B."/>
            <person name="Kinzler K.W."/>
            <person name="Velculescu V.E."/>
        </authorList>
    </citation>
    <scope>VARIANT [LARGE SCALE ANALYSIS] HIS-794</scope>
</reference>
<reference key="11">
    <citation type="journal article" date="2008" name="Am. J. Hum. Genet.">
        <title>Mutations in contactin-1, a neural adhesion and neuromuscular junction protein, cause a familial form of lethal congenital myopathy.</title>
        <authorList>
            <person name="Compton A.G."/>
            <person name="Albrecht D.E."/>
            <person name="Seto J.T."/>
            <person name="Cooper S.T."/>
            <person name="Ilkovski B."/>
            <person name="Jones K.J."/>
            <person name="Challis D."/>
            <person name="Mowat D."/>
            <person name="Ranscht B."/>
            <person name="Bahlo M."/>
            <person name="Froehner S.C."/>
            <person name="North K.N."/>
        </authorList>
    </citation>
    <scope>INVOLVEMENT IN CMYO12</scope>
</reference>